<comment type="function">
    <text evidence="1">Plays a role in peptidoglycan recycling by cleaving the terminal beta-1,4-linked N-acetylglucosamine (GlcNAc) from peptide-linked peptidoglycan fragments, giving rise to free GlcNAc, anhydro-N-acetylmuramic acid and anhydro-N-acetylmuramic acid-linked peptides.</text>
</comment>
<comment type="catalytic activity">
    <reaction evidence="1">
        <text>Hydrolysis of terminal non-reducing N-acetyl-D-hexosamine residues in N-acetyl-beta-D-hexosaminides.</text>
        <dbReference type="EC" id="3.2.1.52"/>
    </reaction>
</comment>
<comment type="pathway">
    <text evidence="1">Cell wall biogenesis; peptidoglycan recycling.</text>
</comment>
<comment type="subcellular location">
    <subcellularLocation>
        <location evidence="1">Cytoplasm</location>
    </subcellularLocation>
</comment>
<comment type="similarity">
    <text evidence="1">Belongs to the glycosyl hydrolase 3 family. NagZ subfamily.</text>
</comment>
<gene>
    <name evidence="1" type="primary">nagZ</name>
    <name type="ordered locus">BP2080</name>
</gene>
<sequence>MSSKKKTKPVLPPGPVMVDVAGTTLTKDEKRRLRNPLVGGVILFARNFTDRRQLCALTRAIHKARKEPLLIAVDHEGGRVQRFRDDGFTALPPMQELGKLWDRDPLAAMRLATEAGYVLAAELRACGVDLSFTPVLDLDYGVSKVIGNRAFHHDARVVTMLSRALTQGLALAGMAACGKHFPGHGFVGADSHHEIPVDPRPLARILKDDAAPYAWLGDLVMPAVMPAHVIYPKVDAQPAGFSRRWVSEILRERLGYDGVVFSDDLTMEGASVAGDILARAEAALGAGCDMVLVCRPDLADELLDRLQVQHPAASVERIRRLLPRFAAPDWDTLQNDSRYQHARRLQSQIVSG</sequence>
<feature type="chain" id="PRO_0000210783" description="Beta-hexosaminidase">
    <location>
        <begin position="1"/>
        <end position="352"/>
    </location>
</feature>
<feature type="active site" description="Proton donor/acceptor" evidence="1">
    <location>
        <position position="192"/>
    </location>
</feature>
<feature type="active site" description="Nucleophile" evidence="1">
    <location>
        <position position="263"/>
    </location>
</feature>
<feature type="binding site" evidence="1">
    <location>
        <position position="74"/>
    </location>
    <ligand>
        <name>substrate</name>
    </ligand>
</feature>
<feature type="binding site" evidence="1">
    <location>
        <position position="82"/>
    </location>
    <ligand>
        <name>substrate</name>
    </ligand>
</feature>
<feature type="binding site" evidence="1">
    <location>
        <position position="149"/>
    </location>
    <ligand>
        <name>substrate</name>
    </ligand>
</feature>
<feature type="binding site" evidence="1">
    <location>
        <begin position="179"/>
        <end position="180"/>
    </location>
    <ligand>
        <name>substrate</name>
    </ligand>
</feature>
<feature type="site" description="Important for catalytic activity" evidence="1">
    <location>
        <position position="190"/>
    </location>
</feature>
<organism>
    <name type="scientific">Bordetella pertussis (strain Tohama I / ATCC BAA-589 / NCTC 13251)</name>
    <dbReference type="NCBI Taxonomy" id="257313"/>
    <lineage>
        <taxon>Bacteria</taxon>
        <taxon>Pseudomonadati</taxon>
        <taxon>Pseudomonadota</taxon>
        <taxon>Betaproteobacteria</taxon>
        <taxon>Burkholderiales</taxon>
        <taxon>Alcaligenaceae</taxon>
        <taxon>Bordetella</taxon>
    </lineage>
</organism>
<evidence type="ECO:0000255" key="1">
    <source>
        <dbReference type="HAMAP-Rule" id="MF_00364"/>
    </source>
</evidence>
<reference key="1">
    <citation type="journal article" date="2003" name="Nat. Genet.">
        <title>Comparative analysis of the genome sequences of Bordetella pertussis, Bordetella parapertussis and Bordetella bronchiseptica.</title>
        <authorList>
            <person name="Parkhill J."/>
            <person name="Sebaihia M."/>
            <person name="Preston A."/>
            <person name="Murphy L.D."/>
            <person name="Thomson N.R."/>
            <person name="Harris D.E."/>
            <person name="Holden M.T.G."/>
            <person name="Churcher C.M."/>
            <person name="Bentley S.D."/>
            <person name="Mungall K.L."/>
            <person name="Cerdeno-Tarraga A.-M."/>
            <person name="Temple L."/>
            <person name="James K.D."/>
            <person name="Harris B."/>
            <person name="Quail M.A."/>
            <person name="Achtman M."/>
            <person name="Atkin R."/>
            <person name="Baker S."/>
            <person name="Basham D."/>
            <person name="Bason N."/>
            <person name="Cherevach I."/>
            <person name="Chillingworth T."/>
            <person name="Collins M."/>
            <person name="Cronin A."/>
            <person name="Davis P."/>
            <person name="Doggett J."/>
            <person name="Feltwell T."/>
            <person name="Goble A."/>
            <person name="Hamlin N."/>
            <person name="Hauser H."/>
            <person name="Holroyd S."/>
            <person name="Jagels K."/>
            <person name="Leather S."/>
            <person name="Moule S."/>
            <person name="Norberczak H."/>
            <person name="O'Neil S."/>
            <person name="Ormond D."/>
            <person name="Price C."/>
            <person name="Rabbinowitsch E."/>
            <person name="Rutter S."/>
            <person name="Sanders M."/>
            <person name="Saunders D."/>
            <person name="Seeger K."/>
            <person name="Sharp S."/>
            <person name="Simmonds M."/>
            <person name="Skelton J."/>
            <person name="Squares R."/>
            <person name="Squares S."/>
            <person name="Stevens K."/>
            <person name="Unwin L."/>
            <person name="Whitehead S."/>
            <person name="Barrell B.G."/>
            <person name="Maskell D.J."/>
        </authorList>
    </citation>
    <scope>NUCLEOTIDE SEQUENCE [LARGE SCALE GENOMIC DNA]</scope>
    <source>
        <strain>Tohama I / ATCC BAA-589 / NCTC 13251</strain>
    </source>
</reference>
<protein>
    <recommendedName>
        <fullName evidence="1">Beta-hexosaminidase</fullName>
        <ecNumber evidence="1">3.2.1.52</ecNumber>
    </recommendedName>
    <alternativeName>
        <fullName evidence="1">Beta-N-acetylhexosaminidase</fullName>
    </alternativeName>
    <alternativeName>
        <fullName evidence="1">N-acetyl-beta-glucosaminidase</fullName>
    </alternativeName>
</protein>
<keyword id="KW-0131">Cell cycle</keyword>
<keyword id="KW-0132">Cell division</keyword>
<keyword id="KW-0133">Cell shape</keyword>
<keyword id="KW-0961">Cell wall biogenesis/degradation</keyword>
<keyword id="KW-0963">Cytoplasm</keyword>
<keyword id="KW-0326">Glycosidase</keyword>
<keyword id="KW-0378">Hydrolase</keyword>
<keyword id="KW-0573">Peptidoglycan synthesis</keyword>
<keyword id="KW-1185">Reference proteome</keyword>
<dbReference type="EC" id="3.2.1.52" evidence="1"/>
<dbReference type="EMBL" id="BX640417">
    <property type="protein sequence ID" value="CAE42358.1"/>
    <property type="molecule type" value="Genomic_DNA"/>
</dbReference>
<dbReference type="RefSeq" id="NP_880742.1">
    <property type="nucleotide sequence ID" value="NC_002929.2"/>
</dbReference>
<dbReference type="RefSeq" id="WP_010930725.1">
    <property type="nucleotide sequence ID" value="NZ_CP039022.1"/>
</dbReference>
<dbReference type="SMR" id="Q7VWV8"/>
<dbReference type="STRING" id="257313.BP2080"/>
<dbReference type="CAZy" id="GH3">
    <property type="family name" value="Glycoside Hydrolase Family 3"/>
</dbReference>
<dbReference type="PaxDb" id="257313-BP2080"/>
<dbReference type="GeneID" id="69601849"/>
<dbReference type="KEGG" id="bpe:BP2080"/>
<dbReference type="PATRIC" id="fig|257313.5.peg.2236"/>
<dbReference type="eggNOG" id="COG1472">
    <property type="taxonomic scope" value="Bacteria"/>
</dbReference>
<dbReference type="HOGENOM" id="CLU_008392_0_0_4"/>
<dbReference type="UniPathway" id="UPA00544"/>
<dbReference type="Proteomes" id="UP000002676">
    <property type="component" value="Chromosome"/>
</dbReference>
<dbReference type="GO" id="GO:0005737">
    <property type="term" value="C:cytoplasm"/>
    <property type="evidence" value="ECO:0007669"/>
    <property type="project" value="UniProtKB-SubCell"/>
</dbReference>
<dbReference type="GO" id="GO:0004563">
    <property type="term" value="F:beta-N-acetylhexosaminidase activity"/>
    <property type="evidence" value="ECO:0007669"/>
    <property type="project" value="UniProtKB-UniRule"/>
</dbReference>
<dbReference type="GO" id="GO:0005975">
    <property type="term" value="P:carbohydrate metabolic process"/>
    <property type="evidence" value="ECO:0007669"/>
    <property type="project" value="InterPro"/>
</dbReference>
<dbReference type="GO" id="GO:0051301">
    <property type="term" value="P:cell division"/>
    <property type="evidence" value="ECO:0007669"/>
    <property type="project" value="UniProtKB-KW"/>
</dbReference>
<dbReference type="GO" id="GO:0071555">
    <property type="term" value="P:cell wall organization"/>
    <property type="evidence" value="ECO:0007669"/>
    <property type="project" value="UniProtKB-KW"/>
</dbReference>
<dbReference type="GO" id="GO:0009252">
    <property type="term" value="P:peptidoglycan biosynthetic process"/>
    <property type="evidence" value="ECO:0007669"/>
    <property type="project" value="UniProtKB-KW"/>
</dbReference>
<dbReference type="GO" id="GO:0009254">
    <property type="term" value="P:peptidoglycan turnover"/>
    <property type="evidence" value="ECO:0007669"/>
    <property type="project" value="UniProtKB-UniRule"/>
</dbReference>
<dbReference type="GO" id="GO:0008360">
    <property type="term" value="P:regulation of cell shape"/>
    <property type="evidence" value="ECO:0007669"/>
    <property type="project" value="UniProtKB-KW"/>
</dbReference>
<dbReference type="Gene3D" id="3.20.20.300">
    <property type="entry name" value="Glycoside hydrolase, family 3, N-terminal domain"/>
    <property type="match status" value="1"/>
</dbReference>
<dbReference type="HAMAP" id="MF_00364">
    <property type="entry name" value="NagZ"/>
    <property type="match status" value="1"/>
</dbReference>
<dbReference type="InterPro" id="IPR022956">
    <property type="entry name" value="Beta_hexosaminidase_bac"/>
</dbReference>
<dbReference type="InterPro" id="IPR019800">
    <property type="entry name" value="Glyco_hydro_3_AS"/>
</dbReference>
<dbReference type="InterPro" id="IPR001764">
    <property type="entry name" value="Glyco_hydro_3_N"/>
</dbReference>
<dbReference type="InterPro" id="IPR036962">
    <property type="entry name" value="Glyco_hydro_3_N_sf"/>
</dbReference>
<dbReference type="InterPro" id="IPR017853">
    <property type="entry name" value="Glycoside_hydrolase_SF"/>
</dbReference>
<dbReference type="InterPro" id="IPR050226">
    <property type="entry name" value="NagZ_Beta-hexosaminidase"/>
</dbReference>
<dbReference type="NCBIfam" id="NF003740">
    <property type="entry name" value="PRK05337.1"/>
    <property type="match status" value="1"/>
</dbReference>
<dbReference type="PANTHER" id="PTHR30480:SF13">
    <property type="entry name" value="BETA-HEXOSAMINIDASE"/>
    <property type="match status" value="1"/>
</dbReference>
<dbReference type="PANTHER" id="PTHR30480">
    <property type="entry name" value="BETA-HEXOSAMINIDASE-RELATED"/>
    <property type="match status" value="1"/>
</dbReference>
<dbReference type="Pfam" id="PF00933">
    <property type="entry name" value="Glyco_hydro_3"/>
    <property type="match status" value="1"/>
</dbReference>
<dbReference type="SUPFAM" id="SSF51445">
    <property type="entry name" value="(Trans)glycosidases"/>
    <property type="match status" value="1"/>
</dbReference>
<dbReference type="PROSITE" id="PS00775">
    <property type="entry name" value="GLYCOSYL_HYDROL_F3"/>
    <property type="match status" value="1"/>
</dbReference>
<proteinExistence type="inferred from homology"/>
<accession>Q7VWV8</accession>
<name>NAGZ_BORPE</name>